<protein>
    <recommendedName>
        <fullName evidence="1">NADH-quinone oxidoreductase subunit A</fullName>
        <ecNumber evidence="1">7.1.1.-</ecNumber>
    </recommendedName>
    <alternativeName>
        <fullName evidence="1">NADH dehydrogenase I subunit A</fullName>
    </alternativeName>
    <alternativeName>
        <fullName evidence="1">NDH-1 subunit A</fullName>
    </alternativeName>
    <alternativeName>
        <fullName evidence="1">NUO1</fullName>
    </alternativeName>
</protein>
<name>NUOA_NITMU</name>
<accession>Q2YAA5</accession>
<sequence>MNASATQATEIWPLVAYFFLVVMLVVGVMALSYIIGERHRSKATDEPFESGIVTVGLARFRLSAKFYLIAVFFVIFDVEAVFLFAWAVAFRELGWPGYIEAIIFISILGAALAYLWRLGALDWGPPRHSAGRFAKDSRSPNHAVVSK</sequence>
<comment type="function">
    <text evidence="1">NDH-1 shuttles electrons from NADH, via FMN and iron-sulfur (Fe-S) centers, to quinones in the respiratory chain. The immediate electron acceptor for the enzyme in this species is believed to be ubiquinone. Couples the redox reaction to proton translocation (for every two electrons transferred, four hydrogen ions are translocated across the cytoplasmic membrane), and thus conserves the redox energy in a proton gradient.</text>
</comment>
<comment type="catalytic activity">
    <reaction evidence="1">
        <text>a quinone + NADH + 5 H(+)(in) = a quinol + NAD(+) + 4 H(+)(out)</text>
        <dbReference type="Rhea" id="RHEA:57888"/>
        <dbReference type="ChEBI" id="CHEBI:15378"/>
        <dbReference type="ChEBI" id="CHEBI:24646"/>
        <dbReference type="ChEBI" id="CHEBI:57540"/>
        <dbReference type="ChEBI" id="CHEBI:57945"/>
        <dbReference type="ChEBI" id="CHEBI:132124"/>
    </reaction>
</comment>
<comment type="subunit">
    <text evidence="1">NDH-1 is composed of 14 different subunits. Subunits NuoA, H, J, K, L, M, N constitute the membrane sector of the complex.</text>
</comment>
<comment type="subcellular location">
    <subcellularLocation>
        <location evidence="1">Cell inner membrane</location>
        <topology evidence="1">Multi-pass membrane protein</topology>
    </subcellularLocation>
</comment>
<comment type="similarity">
    <text evidence="1">Belongs to the complex I subunit 3 family.</text>
</comment>
<gene>
    <name evidence="1" type="primary">nuoA</name>
    <name type="ordered locus">Nmul_A1013</name>
</gene>
<keyword id="KW-0997">Cell inner membrane</keyword>
<keyword id="KW-1003">Cell membrane</keyword>
<keyword id="KW-0472">Membrane</keyword>
<keyword id="KW-0520">NAD</keyword>
<keyword id="KW-0874">Quinone</keyword>
<keyword id="KW-1185">Reference proteome</keyword>
<keyword id="KW-1278">Translocase</keyword>
<keyword id="KW-0812">Transmembrane</keyword>
<keyword id="KW-1133">Transmembrane helix</keyword>
<keyword id="KW-0813">Transport</keyword>
<keyword id="KW-0830">Ubiquinone</keyword>
<organism>
    <name type="scientific">Nitrosospira multiformis (strain ATCC 25196 / NCIMB 11849 / C 71)</name>
    <dbReference type="NCBI Taxonomy" id="323848"/>
    <lineage>
        <taxon>Bacteria</taxon>
        <taxon>Pseudomonadati</taxon>
        <taxon>Pseudomonadota</taxon>
        <taxon>Betaproteobacteria</taxon>
        <taxon>Nitrosomonadales</taxon>
        <taxon>Nitrosomonadaceae</taxon>
        <taxon>Nitrosospira</taxon>
    </lineage>
</organism>
<reference key="1">
    <citation type="submission" date="2005-08" db="EMBL/GenBank/DDBJ databases">
        <title>Complete sequence of chromosome 1 of Nitrosospira multiformis ATCC 25196.</title>
        <authorList>
            <person name="Copeland A."/>
            <person name="Lucas S."/>
            <person name="Lapidus A."/>
            <person name="Barry K."/>
            <person name="Detter J.C."/>
            <person name="Glavina T."/>
            <person name="Hammon N."/>
            <person name="Israni S."/>
            <person name="Pitluck S."/>
            <person name="Chain P."/>
            <person name="Malfatti S."/>
            <person name="Shin M."/>
            <person name="Vergez L."/>
            <person name="Schmutz J."/>
            <person name="Larimer F."/>
            <person name="Land M."/>
            <person name="Hauser L."/>
            <person name="Kyrpides N."/>
            <person name="Lykidis A."/>
            <person name="Richardson P."/>
        </authorList>
    </citation>
    <scope>NUCLEOTIDE SEQUENCE [LARGE SCALE GENOMIC DNA]</scope>
    <source>
        <strain>ATCC 25196 / NCIMB 11849 / C 71</strain>
    </source>
</reference>
<feature type="chain" id="PRO_0000362708" description="NADH-quinone oxidoreductase subunit A">
    <location>
        <begin position="1"/>
        <end position="147"/>
    </location>
</feature>
<feature type="transmembrane region" description="Helical" evidence="1">
    <location>
        <begin position="11"/>
        <end position="31"/>
    </location>
</feature>
<feature type="transmembrane region" description="Helical" evidence="1">
    <location>
        <begin position="68"/>
        <end position="88"/>
    </location>
</feature>
<feature type="transmembrane region" description="Helical" evidence="1">
    <location>
        <begin position="93"/>
        <end position="113"/>
    </location>
</feature>
<proteinExistence type="inferred from homology"/>
<evidence type="ECO:0000255" key="1">
    <source>
        <dbReference type="HAMAP-Rule" id="MF_01394"/>
    </source>
</evidence>
<dbReference type="EC" id="7.1.1.-" evidence="1"/>
<dbReference type="EMBL" id="CP000103">
    <property type="protein sequence ID" value="ABB74316.1"/>
    <property type="molecule type" value="Genomic_DNA"/>
</dbReference>
<dbReference type="RefSeq" id="WP_011380361.1">
    <property type="nucleotide sequence ID" value="NC_007614.1"/>
</dbReference>
<dbReference type="SMR" id="Q2YAA5"/>
<dbReference type="STRING" id="323848.Nmul_A1013"/>
<dbReference type="KEGG" id="nmu:Nmul_A1013"/>
<dbReference type="eggNOG" id="COG0838">
    <property type="taxonomic scope" value="Bacteria"/>
</dbReference>
<dbReference type="HOGENOM" id="CLU_119549_2_0_4"/>
<dbReference type="OrthoDB" id="9791970at2"/>
<dbReference type="Proteomes" id="UP000002718">
    <property type="component" value="Chromosome"/>
</dbReference>
<dbReference type="GO" id="GO:0030964">
    <property type="term" value="C:NADH dehydrogenase complex"/>
    <property type="evidence" value="ECO:0007669"/>
    <property type="project" value="TreeGrafter"/>
</dbReference>
<dbReference type="GO" id="GO:0005886">
    <property type="term" value="C:plasma membrane"/>
    <property type="evidence" value="ECO:0007669"/>
    <property type="project" value="UniProtKB-SubCell"/>
</dbReference>
<dbReference type="GO" id="GO:0008137">
    <property type="term" value="F:NADH dehydrogenase (ubiquinone) activity"/>
    <property type="evidence" value="ECO:0007669"/>
    <property type="project" value="InterPro"/>
</dbReference>
<dbReference type="GO" id="GO:0050136">
    <property type="term" value="F:NADH:ubiquinone reductase (non-electrogenic) activity"/>
    <property type="evidence" value="ECO:0007669"/>
    <property type="project" value="UniProtKB-UniRule"/>
</dbReference>
<dbReference type="GO" id="GO:0048038">
    <property type="term" value="F:quinone binding"/>
    <property type="evidence" value="ECO:0007669"/>
    <property type="project" value="UniProtKB-KW"/>
</dbReference>
<dbReference type="Gene3D" id="1.20.58.1610">
    <property type="entry name" value="NADH:ubiquinone/plastoquinone oxidoreductase, chain 3"/>
    <property type="match status" value="1"/>
</dbReference>
<dbReference type="HAMAP" id="MF_01394">
    <property type="entry name" value="NDH1_NuoA"/>
    <property type="match status" value="1"/>
</dbReference>
<dbReference type="InterPro" id="IPR023043">
    <property type="entry name" value="NAD(P)H_OxRDtase_bac/plastid"/>
</dbReference>
<dbReference type="InterPro" id="IPR000440">
    <property type="entry name" value="NADH_UbQ/plastoQ_OxRdtase_su3"/>
</dbReference>
<dbReference type="InterPro" id="IPR038430">
    <property type="entry name" value="NDAH_ubi_oxred_su3_sf"/>
</dbReference>
<dbReference type="PANTHER" id="PTHR11058:SF21">
    <property type="entry name" value="NADH-QUINONE OXIDOREDUCTASE SUBUNIT A"/>
    <property type="match status" value="1"/>
</dbReference>
<dbReference type="PANTHER" id="PTHR11058">
    <property type="entry name" value="NADH-UBIQUINONE OXIDOREDUCTASE CHAIN 3"/>
    <property type="match status" value="1"/>
</dbReference>
<dbReference type="Pfam" id="PF00507">
    <property type="entry name" value="Oxidored_q4"/>
    <property type="match status" value="1"/>
</dbReference>